<keyword id="KW-0175">Coiled coil</keyword>
<keyword id="KW-1185">Reference proteome</keyword>
<reference key="1">
    <citation type="journal article" date="2003" name="DNA Res.">
        <title>Complete genome structure of Gloeobacter violaceus PCC 7421, a cyanobacterium that lacks thylakoids.</title>
        <authorList>
            <person name="Nakamura Y."/>
            <person name="Kaneko T."/>
            <person name="Sato S."/>
            <person name="Mimuro M."/>
            <person name="Miyashita H."/>
            <person name="Tsuchiya T."/>
            <person name="Sasamoto S."/>
            <person name="Watanabe A."/>
            <person name="Kawashima K."/>
            <person name="Kishida Y."/>
            <person name="Kiyokawa C."/>
            <person name="Kohara M."/>
            <person name="Matsumoto M."/>
            <person name="Matsuno A."/>
            <person name="Nakazaki N."/>
            <person name="Shimpo S."/>
            <person name="Takeuchi C."/>
            <person name="Yamada M."/>
            <person name="Tabata S."/>
        </authorList>
    </citation>
    <scope>NUCLEOTIDE SEQUENCE [LARGE SCALE GENOMIC DNA]</scope>
    <source>
        <strain>ATCC 29082 / PCC 7421</strain>
    </source>
</reference>
<feature type="chain" id="PRO_0000235212" description="Protein Thf1">
    <location>
        <begin position="1"/>
        <end position="228"/>
    </location>
</feature>
<feature type="region of interest" description="Disordered" evidence="2">
    <location>
        <begin position="209"/>
        <end position="228"/>
    </location>
</feature>
<feature type="coiled-coil region" evidence="1">
    <location>
        <begin position="201"/>
        <end position="223"/>
    </location>
</feature>
<protein>
    <recommendedName>
        <fullName evidence="1">Protein Thf1</fullName>
    </recommendedName>
</protein>
<proteinExistence type="inferred from homology"/>
<dbReference type="EMBL" id="BA000045">
    <property type="protein sequence ID" value="BAC89341.1"/>
    <property type="molecule type" value="Genomic_DNA"/>
</dbReference>
<dbReference type="RefSeq" id="NP_924346.1">
    <property type="nucleotide sequence ID" value="NC_005125.1"/>
</dbReference>
<dbReference type="SMR" id="Q7NKS7"/>
<dbReference type="STRING" id="251221.gene:10758883"/>
<dbReference type="EnsemblBacteria" id="BAC89341">
    <property type="protein sequence ID" value="BAC89341"/>
    <property type="gene ID" value="BAC89341"/>
</dbReference>
<dbReference type="KEGG" id="gvi:glr1400"/>
<dbReference type="PATRIC" id="fig|251221.4.peg.1429"/>
<dbReference type="eggNOG" id="ENOG502Z86M">
    <property type="taxonomic scope" value="Bacteria"/>
</dbReference>
<dbReference type="HOGENOM" id="CLU_079763_1_0_3"/>
<dbReference type="InParanoid" id="Q7NKS7"/>
<dbReference type="OrthoDB" id="463078at2"/>
<dbReference type="PhylomeDB" id="Q7NKS7"/>
<dbReference type="Proteomes" id="UP000000557">
    <property type="component" value="Chromosome"/>
</dbReference>
<dbReference type="GO" id="GO:0030096">
    <property type="term" value="C:plasma membrane-derived thylakoid photosystem II"/>
    <property type="evidence" value="ECO:0000318"/>
    <property type="project" value="GO_Central"/>
</dbReference>
<dbReference type="GO" id="GO:0010207">
    <property type="term" value="P:photosystem II assembly"/>
    <property type="evidence" value="ECO:0007669"/>
    <property type="project" value="InterPro"/>
</dbReference>
<dbReference type="HAMAP" id="MF_01843">
    <property type="entry name" value="Thf1"/>
    <property type="match status" value="1"/>
</dbReference>
<dbReference type="InterPro" id="IPR017499">
    <property type="entry name" value="Thf1"/>
</dbReference>
<dbReference type="NCBIfam" id="TIGR03060">
    <property type="entry name" value="PS_II_psb29"/>
    <property type="match status" value="1"/>
</dbReference>
<dbReference type="PANTHER" id="PTHR34793">
    <property type="entry name" value="PROTEIN THYLAKOID FORMATION 1, CHLOROPLASTIC"/>
    <property type="match status" value="1"/>
</dbReference>
<dbReference type="PANTHER" id="PTHR34793:SF1">
    <property type="entry name" value="PROTEIN THYLAKOID FORMATION 1, CHLOROPLASTIC"/>
    <property type="match status" value="1"/>
</dbReference>
<dbReference type="Pfam" id="PF11264">
    <property type="entry name" value="ThylakoidFormat"/>
    <property type="match status" value="1"/>
</dbReference>
<accession>Q7NKS7</accession>
<gene>
    <name evidence="1" type="primary">thf1</name>
    <name type="ordered locus">glr1400</name>
</gene>
<sequence>MTSKRTVSDSKRAFFAAYPRPVNSIYRRVIDELLVEVHLLITNQDFRHDPLFATGLLTAYQALMEGYTPVEQRDAILRALCTALELSYEQLHTDAAQWRAIAAELPAQEVLEVMAGKREAGDGRLKAMGDTLAGIANAERFKYSRLFSLGLANILEQAGRAAAMSEKDRLERLQQICTYLKLDYNRVKRDLDFFHSVLERIKRSKEVVDELSQTERRKREERAVSQPG</sequence>
<name>THF1_GLOVI</name>
<comment type="function">
    <text evidence="1">May be involved in photosynthetic membrane biogenesis.</text>
</comment>
<comment type="similarity">
    <text evidence="1">Belongs to the THF1 family.</text>
</comment>
<evidence type="ECO:0000255" key="1">
    <source>
        <dbReference type="HAMAP-Rule" id="MF_01843"/>
    </source>
</evidence>
<evidence type="ECO:0000256" key="2">
    <source>
        <dbReference type="SAM" id="MobiDB-lite"/>
    </source>
</evidence>
<organism>
    <name type="scientific">Gloeobacter violaceus (strain ATCC 29082 / PCC 7421)</name>
    <dbReference type="NCBI Taxonomy" id="251221"/>
    <lineage>
        <taxon>Bacteria</taxon>
        <taxon>Bacillati</taxon>
        <taxon>Cyanobacteriota</taxon>
        <taxon>Cyanophyceae</taxon>
        <taxon>Gloeobacterales</taxon>
        <taxon>Gloeobacteraceae</taxon>
        <taxon>Gloeobacter</taxon>
    </lineage>
</organism>